<evidence type="ECO:0000250" key="1"/>
<evidence type="ECO:0000255" key="2"/>
<evidence type="ECO:0000255" key="3">
    <source>
        <dbReference type="PROSITE-ProRule" id="PRU10074"/>
    </source>
</evidence>
<evidence type="ECO:0000305" key="4"/>
<accession>Q54VW1</accession>
<reference key="1">
    <citation type="journal article" date="2005" name="Nature">
        <title>The genome of the social amoeba Dictyostelium discoideum.</title>
        <authorList>
            <person name="Eichinger L."/>
            <person name="Pachebat J.A."/>
            <person name="Gloeckner G."/>
            <person name="Rajandream M.A."/>
            <person name="Sucgang R."/>
            <person name="Berriman M."/>
            <person name="Song J."/>
            <person name="Olsen R."/>
            <person name="Szafranski K."/>
            <person name="Xu Q."/>
            <person name="Tunggal B."/>
            <person name="Kummerfeld S."/>
            <person name="Madera M."/>
            <person name="Konfortov B.A."/>
            <person name="Rivero F."/>
            <person name="Bankier A.T."/>
            <person name="Lehmann R."/>
            <person name="Hamlin N."/>
            <person name="Davies R."/>
            <person name="Gaudet P."/>
            <person name="Fey P."/>
            <person name="Pilcher K."/>
            <person name="Chen G."/>
            <person name="Saunders D."/>
            <person name="Sodergren E.J."/>
            <person name="Davis P."/>
            <person name="Kerhornou A."/>
            <person name="Nie X."/>
            <person name="Hall N."/>
            <person name="Anjard C."/>
            <person name="Hemphill L."/>
            <person name="Bason N."/>
            <person name="Farbrother P."/>
            <person name="Desany B."/>
            <person name="Just E."/>
            <person name="Morio T."/>
            <person name="Rost R."/>
            <person name="Churcher C.M."/>
            <person name="Cooper J."/>
            <person name="Haydock S."/>
            <person name="van Driessche N."/>
            <person name="Cronin A."/>
            <person name="Goodhead I."/>
            <person name="Muzny D.M."/>
            <person name="Mourier T."/>
            <person name="Pain A."/>
            <person name="Lu M."/>
            <person name="Harper D."/>
            <person name="Lindsay R."/>
            <person name="Hauser H."/>
            <person name="James K.D."/>
            <person name="Quiles M."/>
            <person name="Madan Babu M."/>
            <person name="Saito T."/>
            <person name="Buchrieser C."/>
            <person name="Wardroper A."/>
            <person name="Felder M."/>
            <person name="Thangavelu M."/>
            <person name="Johnson D."/>
            <person name="Knights A."/>
            <person name="Loulseged H."/>
            <person name="Mungall K.L."/>
            <person name="Oliver K."/>
            <person name="Price C."/>
            <person name="Quail M.A."/>
            <person name="Urushihara H."/>
            <person name="Hernandez J."/>
            <person name="Rabbinowitsch E."/>
            <person name="Steffen D."/>
            <person name="Sanders M."/>
            <person name="Ma J."/>
            <person name="Kohara Y."/>
            <person name="Sharp S."/>
            <person name="Simmonds M.N."/>
            <person name="Spiegler S."/>
            <person name="Tivey A."/>
            <person name="Sugano S."/>
            <person name="White B."/>
            <person name="Walker D."/>
            <person name="Woodward J.R."/>
            <person name="Winckler T."/>
            <person name="Tanaka Y."/>
            <person name="Shaulsky G."/>
            <person name="Schleicher M."/>
            <person name="Weinstock G.M."/>
            <person name="Rosenthal A."/>
            <person name="Cox E.C."/>
            <person name="Chisholm R.L."/>
            <person name="Gibbs R.A."/>
            <person name="Loomis W.F."/>
            <person name="Platzer M."/>
            <person name="Kay R.R."/>
            <person name="Williams J.G."/>
            <person name="Dear P.H."/>
            <person name="Noegel A.A."/>
            <person name="Barrell B.G."/>
            <person name="Kuspa A."/>
        </authorList>
    </citation>
    <scope>NUCLEOTIDE SEQUENCE [LARGE SCALE GENOMIC DNA]</scope>
    <source>
        <strain>AX4</strain>
    </source>
</reference>
<comment type="function">
    <text evidence="1">Probable carboxypeptidase.</text>
</comment>
<comment type="subcellular location">
    <subcellularLocation>
        <location evidence="4">Membrane</location>
        <topology evidence="4">Single-pass type I membrane protein</topology>
    </subcellularLocation>
</comment>
<comment type="similarity">
    <text evidence="4">Belongs to the peptidase S10 family.</text>
</comment>
<gene>
    <name type="ORF">DDB_G0280105</name>
</gene>
<name>SCPL2_DICDI</name>
<organism>
    <name type="scientific">Dictyostelium discoideum</name>
    <name type="common">Social amoeba</name>
    <dbReference type="NCBI Taxonomy" id="44689"/>
    <lineage>
        <taxon>Eukaryota</taxon>
        <taxon>Amoebozoa</taxon>
        <taxon>Evosea</taxon>
        <taxon>Eumycetozoa</taxon>
        <taxon>Dictyostelia</taxon>
        <taxon>Dictyosteliales</taxon>
        <taxon>Dictyosteliaceae</taxon>
        <taxon>Dictyostelium</taxon>
    </lineage>
</organism>
<feature type="signal peptide" evidence="2">
    <location>
        <begin position="1"/>
        <end position="23"/>
    </location>
</feature>
<feature type="propeptide" id="PRO_0000331590" evidence="2">
    <location>
        <begin position="24"/>
        <end status="unknown"/>
    </location>
</feature>
<feature type="chain" id="PRO_0000331591" description="Serine carboxypeptidase S10 family member 2">
    <location>
        <begin status="unknown"/>
        <end position="563"/>
    </location>
</feature>
<feature type="topological domain" description="Extracellular" evidence="2">
    <location>
        <begin position="24"/>
        <end position="529"/>
    </location>
</feature>
<feature type="transmembrane region" description="Helical" evidence="2">
    <location>
        <begin position="530"/>
        <end position="550"/>
    </location>
</feature>
<feature type="topological domain" description="Cytoplasmic" evidence="2">
    <location>
        <begin position="551"/>
        <end position="563"/>
    </location>
</feature>
<feature type="active site" evidence="3">
    <location>
        <position position="225"/>
    </location>
</feature>
<feature type="active site" evidence="3">
    <location>
        <position position="417"/>
    </location>
</feature>
<feature type="active site" evidence="3">
    <location>
        <position position="479"/>
    </location>
</feature>
<feature type="glycosylation site" description="N-linked (GlcNAc...) asparagine" evidence="2">
    <location>
        <position position="31"/>
    </location>
</feature>
<feature type="glycosylation site" description="N-linked (GlcNAc...) asparagine" evidence="2">
    <location>
        <position position="95"/>
    </location>
</feature>
<feature type="glycosylation site" description="N-linked (GlcNAc...) asparagine" evidence="2">
    <location>
        <position position="110"/>
    </location>
</feature>
<feature type="glycosylation site" description="N-linked (GlcNAc...) asparagine" evidence="2">
    <location>
        <position position="213"/>
    </location>
</feature>
<feature type="glycosylation site" description="N-linked (GlcNAc...) asparagine" evidence="2">
    <location>
        <position position="244"/>
    </location>
</feature>
<feature type="glycosylation site" description="N-linked (GlcNAc...) asparagine" evidence="2">
    <location>
        <position position="328"/>
    </location>
</feature>
<feature type="glycosylation site" description="N-linked (GlcNAc...) asparagine" evidence="2">
    <location>
        <position position="382"/>
    </location>
</feature>
<feature type="glycosylation site" description="N-linked (GlcNAc...) asparagine" evidence="2">
    <location>
        <position position="468"/>
    </location>
</feature>
<feature type="glycosylation site" description="N-linked (GlcNAc...) asparagine" evidence="2">
    <location>
        <position position="499"/>
    </location>
</feature>
<keyword id="KW-0121">Carboxypeptidase</keyword>
<keyword id="KW-0325">Glycoprotein</keyword>
<keyword id="KW-0378">Hydrolase</keyword>
<keyword id="KW-0472">Membrane</keyword>
<keyword id="KW-0645">Protease</keyword>
<keyword id="KW-1185">Reference proteome</keyword>
<keyword id="KW-0732">Signal</keyword>
<keyword id="KW-0812">Transmembrane</keyword>
<keyword id="KW-1133">Transmembrane helix</keyword>
<keyword id="KW-0865">Zymogen</keyword>
<sequence length="563" mass="63223">MNIKIILLSIILIIQLLLLNNNGGIVESKINFSKRKQTDRKPNPSPKTYTKEYYDNKYLKSLKNVKQTPNDFLVTDLPGLDNGILTSFSGLLTTNETSDGNLFFWFFPANETVINPMDAPLLVWLNGGPGCSSMDSVFIETGPLRFIGDSDNSDKFYINPWSWHNSANMLYIDQPFGTGLSFVSDNDGLVTNDLEINQNFYQFIQEFFQIFSNYSTLPFFISGESYAGHYIPHMASYILNMNENLSKDSIKINLQGVAIGNGYTHPTTQINSYREFGYYATGIIGQRQYNNYENLNNLCQEQLSQGNYNSDECANVFNTLLDDSGSSNTSQVNMYDYRLNDPTAGNNWPLPGINQEFVYLNRDDVRSAIHATVTPHQWNECNDTVNGLLTNQDESSLYLFPELLSNIRVLIYNGQFDVICNHVGTTEYLNQIEWDYTQEWSDAPRFTWTSVGTDGSLQSGGYGKTAANLTFVLALGGSHMYPMNMPSTSFDMITRFLKNKSFNDLPQSIGIDAPSTPKPVPLTLGAWIGITVGGCAFGFLVGGLIIYIIMKKSSKNGYYKVIQ</sequence>
<dbReference type="EC" id="3.4.16.-"/>
<dbReference type="EMBL" id="AAFI02000035">
    <property type="protein sequence ID" value="EAL67279.1"/>
    <property type="molecule type" value="Genomic_DNA"/>
</dbReference>
<dbReference type="RefSeq" id="XP_641244.1">
    <property type="nucleotide sequence ID" value="XM_636152.1"/>
</dbReference>
<dbReference type="SMR" id="Q54VW1"/>
<dbReference type="ESTHER" id="dicdi-q54vw1">
    <property type="family name" value="Carboxypeptidase_S10"/>
</dbReference>
<dbReference type="MEROPS" id="S10.A68"/>
<dbReference type="GlyGen" id="Q54VW1">
    <property type="glycosylation" value="9 sites"/>
</dbReference>
<dbReference type="PaxDb" id="44689-DDB0229903"/>
<dbReference type="EnsemblProtists" id="EAL67279">
    <property type="protein sequence ID" value="EAL67279"/>
    <property type="gene ID" value="DDB_G0280105"/>
</dbReference>
<dbReference type="GeneID" id="8622375"/>
<dbReference type="KEGG" id="ddi:DDB_G0280105"/>
<dbReference type="dictyBase" id="DDB_G0280105"/>
<dbReference type="VEuPathDB" id="AmoebaDB:DDB_G0280105"/>
<dbReference type="eggNOG" id="KOG1282">
    <property type="taxonomic scope" value="Eukaryota"/>
</dbReference>
<dbReference type="HOGENOM" id="CLU_008523_10_1_1"/>
<dbReference type="InParanoid" id="Q54VW1"/>
<dbReference type="OMA" id="PLMFAGQ"/>
<dbReference type="PhylomeDB" id="Q54VW1"/>
<dbReference type="PRO" id="PR:Q54VW1"/>
<dbReference type="Proteomes" id="UP000002195">
    <property type="component" value="Chromosome 3"/>
</dbReference>
<dbReference type="GO" id="GO:0016020">
    <property type="term" value="C:membrane"/>
    <property type="evidence" value="ECO:0007669"/>
    <property type="project" value="UniProtKB-SubCell"/>
</dbReference>
<dbReference type="GO" id="GO:0004185">
    <property type="term" value="F:serine-type carboxypeptidase activity"/>
    <property type="evidence" value="ECO:0000318"/>
    <property type="project" value="GO_Central"/>
</dbReference>
<dbReference type="GO" id="GO:0006508">
    <property type="term" value="P:proteolysis"/>
    <property type="evidence" value="ECO:0007669"/>
    <property type="project" value="UniProtKB-KW"/>
</dbReference>
<dbReference type="Gene3D" id="3.40.50.1820">
    <property type="entry name" value="alpha/beta hydrolase"/>
    <property type="match status" value="1"/>
</dbReference>
<dbReference type="InterPro" id="IPR029058">
    <property type="entry name" value="AB_hydrolase_fold"/>
</dbReference>
<dbReference type="InterPro" id="IPR001563">
    <property type="entry name" value="Peptidase_S10"/>
</dbReference>
<dbReference type="InterPro" id="IPR018202">
    <property type="entry name" value="Ser_caboxypep_ser_AS"/>
</dbReference>
<dbReference type="PANTHER" id="PTHR11802:SF3">
    <property type="entry name" value="RETINOID-INDUCIBLE SERINE CARBOXYPEPTIDASE"/>
    <property type="match status" value="1"/>
</dbReference>
<dbReference type="PANTHER" id="PTHR11802">
    <property type="entry name" value="SERINE PROTEASE FAMILY S10 SERINE CARBOXYPEPTIDASE"/>
    <property type="match status" value="1"/>
</dbReference>
<dbReference type="Pfam" id="PF00450">
    <property type="entry name" value="Peptidase_S10"/>
    <property type="match status" value="1"/>
</dbReference>
<dbReference type="PRINTS" id="PR00724">
    <property type="entry name" value="CRBOXYPTASEC"/>
</dbReference>
<dbReference type="SUPFAM" id="SSF53474">
    <property type="entry name" value="alpha/beta-Hydrolases"/>
    <property type="match status" value="1"/>
</dbReference>
<dbReference type="PROSITE" id="PS00131">
    <property type="entry name" value="CARBOXYPEPT_SER_SER"/>
    <property type="match status" value="1"/>
</dbReference>
<proteinExistence type="inferred from homology"/>
<protein>
    <recommendedName>
        <fullName>Serine carboxypeptidase S10 family member 2</fullName>
        <ecNumber>3.4.16.-</ecNumber>
    </recommendedName>
</protein>